<gene>
    <name type="primary">RERE</name>
    <name type="synonym">ARG</name>
    <name type="synonym">ARP</name>
    <name type="synonym">ATN1L</name>
    <name type="synonym">KIAA0458</name>
</gene>
<evidence type="ECO:0000250" key="1"/>
<evidence type="ECO:0000250" key="2">
    <source>
        <dbReference type="UniProtKB" id="Q80TZ9"/>
    </source>
</evidence>
<evidence type="ECO:0000255" key="3"/>
<evidence type="ECO:0000255" key="4">
    <source>
        <dbReference type="PROSITE-ProRule" id="PRU00370"/>
    </source>
</evidence>
<evidence type="ECO:0000255" key="5">
    <source>
        <dbReference type="PROSITE-ProRule" id="PRU00512"/>
    </source>
</evidence>
<evidence type="ECO:0000255" key="6">
    <source>
        <dbReference type="PROSITE-ProRule" id="PRU00624"/>
    </source>
</evidence>
<evidence type="ECO:0000256" key="7">
    <source>
        <dbReference type="SAM" id="MobiDB-lite"/>
    </source>
</evidence>
<evidence type="ECO:0000269" key="8">
    <source>
    </source>
</evidence>
<evidence type="ECO:0000269" key="9">
    <source>
    </source>
</evidence>
<evidence type="ECO:0000269" key="10">
    <source>
    </source>
</evidence>
<evidence type="ECO:0000269" key="11">
    <source>
    </source>
</evidence>
<evidence type="ECO:0000269" key="12">
    <source>
    </source>
</evidence>
<evidence type="ECO:0000303" key="13">
    <source ref="3"/>
</evidence>
<evidence type="ECO:0000305" key="14"/>
<evidence type="ECO:0007744" key="15">
    <source>
    </source>
</evidence>
<evidence type="ECO:0007744" key="16">
    <source>
    </source>
</evidence>
<evidence type="ECO:0007744" key="17">
    <source>
    </source>
</evidence>
<evidence type="ECO:0007744" key="18">
    <source>
    </source>
</evidence>
<evidence type="ECO:0007744" key="19">
    <source>
    </source>
</evidence>
<evidence type="ECO:0007744" key="20">
    <source>
    </source>
</evidence>
<evidence type="ECO:0007744" key="21">
    <source>
    </source>
</evidence>
<evidence type="ECO:0007744" key="22">
    <source>
    </source>
</evidence>
<evidence type="ECO:0007744" key="23">
    <source>
    </source>
</evidence>
<evidence type="ECO:0007829" key="24">
    <source>
        <dbReference type="PDB" id="2YQK"/>
    </source>
</evidence>
<sequence length="1566" mass="172424">MTADKDKDKDKEKDRDRDRDREREKRDKARESENSRPRRSCTLEGGAKNYAESDHSEDEDNDNNSATAEESTKKNKKKPPKKKSRYERTDTGEITSYITEDDVVYRPGDCVYIESRRPNTPYFICSIQDFKLVHNSQACCRSPTPALCDPPACSLPVASQPPQHLSEAGRGPVGSKRDHLLMNVKWYYRQSEVPDSVYQHLVQDRHNENDSGRELVITDPVIKNRELFISDYVDTYHAAALRGKCNISHFSDIFAAREFKARVDSFFYILGYNPETRRLNSTQGEIRVGPSHQAKLPDLQPFPSPDGDTVTQHEELVWMPGVNDCDLLMYLRAARSMAAFAGMCDGGSTEDGCVAASRDDTTLNALNTLHESGYDAGKALQRLVKKPVPKLIEKCWTEDEVKRFVKGLRQYGKNFFRIRKELLPNKETGELITFYYYWKKTPEAASSRAHRRHRRQAVFRRIKTRTASTPVNTPSRPPSSEFLDLSSASEDDFDSEDSEQELKGYACRHCFTTTSKDWHHGGRENILLCTDCRIHFKKYGELPPIEKPVDPPPFMFKPVKEEDDGLSGKHSMRTRRSRGSMSTLRSGRKKQPASPDGRTSPINEDIRSSGRNSPSAASTSSNDSKAETVKKSAKKVKEEASSPLKSNKRQREKVASDTEEADRTSSKKTKTQEISRPNSPSEGEGESSDSRSVNDEGSSDPKDIDQDNRSTSPSIPSPQDNESDSDSSAQQQMLQAQPPALQAPTGVTPAPSSAPPGTPQLPTPGPTPSATAVPPQGSPTASQAPNQPQAPTAPVPHTHIQQAPALHPQRPPSPHPPPHPSPHPPLQPLTGSAGQPSAPSHAQPPLHGQGPPGPHSLQAGPLLQHPGPPQPFGLPPQASQGQAPLGTSPAAAYPHTSLQLPASQSALQSQQPPREQPLPPAPLAMPHIKPPPTTPIPQLPAPQAHKHPPHLSGPSPFSMNANLPPPPALKPLSSLSTHHPPSAHPPPLQLMPQSQPLPSSPAQPPGLTQSQNLPPPPASHPPTGLHQVAPQPPFAQHPFVPGGPPPITPPTCPSTSTPPAGPGTSAQPPCSGAAASGGSIAGGSSCPLPTVQIKEEALDDAEEPESPPPPPRSPSPEPTVVDTPSHASQSARFYKHLDRGYNSCARTDLYFMPLAGSKLAKKREEAIEKAKREAEQKAREEREREKEKEKEREREREREREAERAAKASSSAHEGRLSDPQLSGPGHMRPSFEPPPTTIAAVPPYIGPDTPALRTLSEYARPHVMSPTNRNHPFYMPLNPTDPLLAYHMPGLYNVDPTIRERELREREIREREIRERELRERMKPGFEVKPPELDPLHPAANPMEHFARHSALTIPPTAGPHPFASFHPGLNPLERERLALAGPQLRPEMSYPDRLAAERIHAERMASLTSDPLARLQMFNVTPHHHQHSHIHSHLHLHQQDPLHQGSAGPVHPLVDPLTAGPHLARFPYPPGTLPNPLLGQPPHEHEMLRHPVFGTPYPRDLPGAIPPPMSAAHQLQAMHAQSAELQRLAMEQQWLHGHPHMHGGHLPSQEDYYSRLKKEGDKQL</sequence>
<feature type="chain" id="PRO_0000083504" description="Arginine-glutamic acid dipeptide repeats protein">
    <location>
        <begin position="1"/>
        <end position="1566"/>
    </location>
</feature>
<feature type="domain" description="BAH" evidence="4">
    <location>
        <begin position="103"/>
        <end position="283"/>
    </location>
</feature>
<feature type="domain" description="ELM2" evidence="5">
    <location>
        <begin position="284"/>
        <end position="387"/>
    </location>
</feature>
<feature type="domain" description="SANT" evidence="6">
    <location>
        <begin position="391"/>
        <end position="443"/>
    </location>
</feature>
<feature type="zinc finger region" description="GATA-type">
    <location>
        <begin position="507"/>
        <end position="532"/>
    </location>
</feature>
<feature type="region of interest" description="Disordered" evidence="7">
    <location>
        <begin position="1"/>
        <end position="90"/>
    </location>
</feature>
<feature type="region of interest" description="Disordered" evidence="7">
    <location>
        <begin position="464"/>
        <end position="495"/>
    </location>
</feature>
<feature type="region of interest" description="Disordered" evidence="7">
    <location>
        <begin position="542"/>
        <end position="1133"/>
    </location>
</feature>
<feature type="region of interest" description="Disordered" evidence="7">
    <location>
        <begin position="1162"/>
        <end position="1246"/>
    </location>
</feature>
<feature type="coiled-coil region" evidence="3">
    <location>
        <begin position="1156"/>
        <end position="1211"/>
    </location>
</feature>
<feature type="compositionally biased region" description="Basic and acidic residues" evidence="7">
    <location>
        <begin position="1"/>
        <end position="36"/>
    </location>
</feature>
<feature type="compositionally biased region" description="Basic residues" evidence="7">
    <location>
        <begin position="74"/>
        <end position="85"/>
    </location>
</feature>
<feature type="compositionally biased region" description="Polar residues" evidence="7">
    <location>
        <begin position="465"/>
        <end position="474"/>
    </location>
</feature>
<feature type="compositionally biased region" description="Low complexity" evidence="7">
    <location>
        <begin position="479"/>
        <end position="488"/>
    </location>
</feature>
<feature type="compositionally biased region" description="Low complexity" evidence="7">
    <location>
        <begin position="609"/>
        <end position="623"/>
    </location>
</feature>
<feature type="compositionally biased region" description="Basic and acidic residues" evidence="7">
    <location>
        <begin position="624"/>
        <end position="640"/>
    </location>
</feature>
<feature type="compositionally biased region" description="Basic and acidic residues" evidence="7">
    <location>
        <begin position="652"/>
        <end position="673"/>
    </location>
</feature>
<feature type="compositionally biased region" description="Basic and acidic residues" evidence="7">
    <location>
        <begin position="688"/>
        <end position="708"/>
    </location>
</feature>
<feature type="compositionally biased region" description="Polar residues" evidence="7">
    <location>
        <begin position="709"/>
        <end position="720"/>
    </location>
</feature>
<feature type="compositionally biased region" description="Low complexity" evidence="7">
    <location>
        <begin position="726"/>
        <end position="751"/>
    </location>
</feature>
<feature type="compositionally biased region" description="Pro residues" evidence="7">
    <location>
        <begin position="752"/>
        <end position="767"/>
    </location>
</feature>
<feature type="compositionally biased region" description="Low complexity" evidence="7">
    <location>
        <begin position="778"/>
        <end position="796"/>
    </location>
</feature>
<feature type="compositionally biased region" description="Pro residues" evidence="7">
    <location>
        <begin position="809"/>
        <end position="827"/>
    </location>
</feature>
<feature type="compositionally biased region" description="Polar residues" evidence="7">
    <location>
        <begin position="829"/>
        <end position="840"/>
    </location>
</feature>
<feature type="compositionally biased region" description="Low complexity" evidence="7">
    <location>
        <begin position="843"/>
        <end position="865"/>
    </location>
</feature>
<feature type="compositionally biased region" description="Low complexity" evidence="7">
    <location>
        <begin position="897"/>
        <end position="913"/>
    </location>
</feature>
<feature type="compositionally biased region" description="Pro residues" evidence="7">
    <location>
        <begin position="914"/>
        <end position="940"/>
    </location>
</feature>
<feature type="compositionally biased region" description="Low complexity" evidence="7">
    <location>
        <begin position="970"/>
        <end position="980"/>
    </location>
</feature>
<feature type="compositionally biased region" description="Pro residues" evidence="7">
    <location>
        <begin position="1030"/>
        <end position="1052"/>
    </location>
</feature>
<feature type="compositionally biased region" description="Low complexity" evidence="7">
    <location>
        <begin position="1053"/>
        <end position="1085"/>
    </location>
</feature>
<feature type="compositionally biased region" description="Pro residues" evidence="7">
    <location>
        <begin position="1106"/>
        <end position="1117"/>
    </location>
</feature>
<feature type="compositionally biased region" description="Basic and acidic residues" evidence="7">
    <location>
        <begin position="1162"/>
        <end position="1206"/>
    </location>
</feature>
<feature type="modified residue" description="Phosphoserine" evidence="16 19">
    <location>
        <position position="53"/>
    </location>
</feature>
<feature type="modified residue" description="Phosphoserine" evidence="16 19">
    <location>
        <position position="56"/>
    </location>
</feature>
<feature type="modified residue" description="Phosphothreonine" evidence="20">
    <location>
        <position position="120"/>
    </location>
</feature>
<feature type="modified residue" description="Phosphoserine" evidence="2">
    <location>
        <position position="142"/>
    </location>
</feature>
<feature type="modified residue" description="Phosphoserine" evidence="15 21">
    <location>
        <position position="304"/>
    </location>
</feature>
<feature type="modified residue" description="Phosphoserine" evidence="20">
    <location>
        <position position="594"/>
    </location>
</feature>
<feature type="modified residue" description="Phosphoserine" evidence="20">
    <location>
        <position position="600"/>
    </location>
</feature>
<feature type="modified residue" description="Phosphoserine" evidence="21">
    <location>
        <position position="613"/>
    </location>
</feature>
<feature type="modified residue" description="Phosphoserine" evidence="16 18 19">
    <location>
        <position position="642"/>
    </location>
</feature>
<feature type="modified residue" description="Phosphoserine" evidence="19">
    <location>
        <position position="656"/>
    </location>
</feature>
<feature type="modified residue" description="Phosphoserine" evidence="17 19 20">
    <location>
        <position position="675"/>
    </location>
</feature>
<feature type="modified residue" description="Phosphoserine" evidence="17 19 20">
    <location>
        <position position="679"/>
    </location>
</feature>
<feature type="modified residue" description="Phosphoserine" evidence="15 19 21">
    <location>
        <position position="1106"/>
    </location>
</feature>
<feature type="modified residue" description="Phosphoserine" evidence="21">
    <location>
        <position position="1113"/>
    </location>
</feature>
<feature type="modified residue" description="Phosphoserine" evidence="2">
    <location>
        <position position="1115"/>
    </location>
</feature>
<feature type="modified residue" description="Phosphothreonine" evidence="21">
    <location>
        <position position="1119"/>
    </location>
</feature>
<feature type="modified residue" description="N6-acetyllysine" evidence="2">
    <location>
        <position position="1158"/>
    </location>
</feature>
<feature type="modified residue" description="Phosphotyrosine" evidence="21">
    <location>
        <position position="1259"/>
    </location>
</feature>
<feature type="modified residue" description="Phosphoserine" evidence="20">
    <location>
        <position position="1266"/>
    </location>
</feature>
<feature type="cross-link" description="Glycyl lysine isopeptide (Lys-Gly) (interchain with G-Cter in SUMO2)" evidence="23">
    <location>
        <position position="560"/>
    </location>
</feature>
<feature type="cross-link" description="Glycyl lysine isopeptide (Lys-Gly) (interchain with G-Cter in SUMO2)" evidence="22 23">
    <location>
        <position position="637"/>
    </location>
</feature>
<feature type="splice variant" id="VSP_016878" description="In isoform 2." evidence="13">
    <location>
        <begin position="1"/>
        <end position="554"/>
    </location>
</feature>
<feature type="sequence variant" id="VAR_077007" description="In NEDBEH; uncertain significance; dbSNP:rs765016528." evidence="12">
    <original>V</original>
    <variation>I</variation>
    <location>
        <position position="471"/>
    </location>
</feature>
<feature type="sequence variant" id="VAR_077008" description="In NEDBEH; uncertain significance; dbSNP:rs766951273." evidence="12">
    <original>G</original>
    <variation>R</variation>
    <location>
        <position position="1156"/>
    </location>
</feature>
<feature type="sequence variant" id="VAR_077009" description="In NEDBEH; uncertain significance; dbSNP:rs878853270." evidence="12">
    <original>P</original>
    <variation>R</variation>
    <location>
        <position position="1262"/>
    </location>
</feature>
<feature type="sequence variant" id="VAR_077010" description="In NEDBEH; uncertain significance; dbSNP:rs869312871." evidence="12">
    <original>H</original>
    <variation>Q</variation>
    <location>
        <position position="1431"/>
    </location>
</feature>
<feature type="sequence conflict" description="In Ref. 1; BAA95898." evidence="14" ref="1">
    <original>S</original>
    <variation>G</variation>
    <location>
        <position position="65"/>
    </location>
</feature>
<feature type="sequence conflict" description="In Ref. 1; BAA95898." evidence="14" ref="1">
    <original>A</original>
    <variation>T</variation>
    <location>
        <position position="68"/>
    </location>
</feature>
<feature type="sequence conflict" description="In Ref. 1; BAA95898." evidence="14" ref="1">
    <original>ES</original>
    <variation>VC</variation>
    <location>
        <begin position="114"/>
        <end position="115"/>
    </location>
</feature>
<feature type="sequence conflict" description="In Ref. 3; AAC31120." evidence="14" ref="3">
    <original>P</original>
    <variation>L</variation>
    <location>
        <position position="643"/>
    </location>
</feature>
<feature type="sequence conflict" description="In Ref. 1; BAA95898." evidence="14" ref="1">
    <original>A</original>
    <variation>G</variation>
    <location>
        <position position="921"/>
    </location>
</feature>
<feature type="sequence conflict" description="In Ref. 1; BAA95898." evidence="14" ref="1">
    <original>P</original>
    <variation>A</variation>
    <location>
        <position position="940"/>
    </location>
</feature>
<feature type="sequence conflict" description="In Ref. 6; AAD27584." evidence="14" ref="6">
    <original>F</original>
    <variation>L</variation>
    <location>
        <position position="957"/>
    </location>
</feature>
<feature type="sequence conflict" description="In Ref. 2; no nucleotide entry." evidence="14" ref="2">
    <original>T</original>
    <variation>K</variation>
    <location>
        <position position="977"/>
    </location>
</feature>
<feature type="sequence conflict" description="In Ref. 2; no nucleotide entry." evidence="14" ref="2">
    <original>H</original>
    <variation>N</variation>
    <location>
        <position position="984"/>
    </location>
</feature>
<feature type="sequence conflict" description="In Ref. 6; AAD27584." evidence="14" ref="6">
    <original>QSQ</original>
    <variation>RTR</variation>
    <location>
        <begin position="1009"/>
        <end position="1011"/>
    </location>
</feature>
<feature type="sequence conflict" description="In Ref. 6; AAD27584." evidence="14" ref="6">
    <original>E</original>
    <variation>D</variation>
    <location>
        <position position="1117"/>
    </location>
</feature>
<feature type="sequence conflict" description="In Ref. 6; AAD27584." evidence="14" ref="6">
    <original>H</original>
    <variation>Q</variation>
    <location>
        <position position="1272"/>
    </location>
</feature>
<feature type="sequence conflict" description="In Ref. 1; BAA95898." evidence="14" ref="1">
    <original>ML</original>
    <variation>IV</variation>
    <location>
        <begin position="1489"/>
        <end position="1490"/>
    </location>
</feature>
<feature type="sequence conflict" description="In Ref. 6; AAD27584." evidence="14" ref="6">
    <original>R</original>
    <variation>K</variation>
    <location>
        <position position="1529"/>
    </location>
</feature>
<feature type="sequence conflict" description="In Ref. 6; AAD27584." evidence="14" ref="6">
    <original>W</original>
    <variation>C</variation>
    <location>
        <position position="1536"/>
    </location>
</feature>
<feature type="sequence conflict" description="In Ref. 6; AAD27584." evidence="14" ref="6">
    <original>M</original>
    <variation>R</variation>
    <location>
        <position position="1543"/>
    </location>
</feature>
<feature type="helix" evidence="24">
    <location>
        <begin position="398"/>
        <end position="410"/>
    </location>
</feature>
<feature type="helix" evidence="24">
    <location>
        <begin position="415"/>
        <end position="421"/>
    </location>
</feature>
<feature type="helix" evidence="24">
    <location>
        <begin position="428"/>
        <end position="439"/>
    </location>
</feature>
<dbReference type="EMBL" id="AB036737">
    <property type="protein sequence ID" value="BAA95898.1"/>
    <property type="molecule type" value="mRNA"/>
</dbReference>
<dbReference type="EMBL" id="AF016005">
    <property type="protein sequence ID" value="AAC31120.1"/>
    <property type="status" value="ALT_FRAME"/>
    <property type="molecule type" value="mRNA"/>
</dbReference>
<dbReference type="EMBL" id="AF041104">
    <property type="protein sequence ID" value="AAC28264.1"/>
    <property type="molecule type" value="Genomic_DNA"/>
</dbReference>
<dbReference type="EMBL" id="AF041096">
    <property type="protein sequence ID" value="AAC28264.1"/>
    <property type="status" value="JOINED"/>
    <property type="molecule type" value="Genomic_DNA"/>
</dbReference>
<dbReference type="EMBL" id="AF041097">
    <property type="protein sequence ID" value="AAC28264.1"/>
    <property type="status" value="JOINED"/>
    <property type="molecule type" value="Genomic_DNA"/>
</dbReference>
<dbReference type="EMBL" id="AF041098">
    <property type="protein sequence ID" value="AAC28264.1"/>
    <property type="status" value="JOINED"/>
    <property type="molecule type" value="Genomic_DNA"/>
</dbReference>
<dbReference type="EMBL" id="AF041099">
    <property type="protein sequence ID" value="AAC28264.1"/>
    <property type="status" value="JOINED"/>
    <property type="molecule type" value="Genomic_DNA"/>
</dbReference>
<dbReference type="EMBL" id="AF041100">
    <property type="protein sequence ID" value="AAC28264.1"/>
    <property type="status" value="JOINED"/>
    <property type="molecule type" value="Genomic_DNA"/>
</dbReference>
<dbReference type="EMBL" id="AF041101">
    <property type="protein sequence ID" value="AAC28264.1"/>
    <property type="status" value="JOINED"/>
    <property type="molecule type" value="Genomic_DNA"/>
</dbReference>
<dbReference type="EMBL" id="AF041102">
    <property type="protein sequence ID" value="AAC28264.1"/>
    <property type="status" value="JOINED"/>
    <property type="molecule type" value="Genomic_DNA"/>
</dbReference>
<dbReference type="EMBL" id="AF041103">
    <property type="protein sequence ID" value="AAC28264.1"/>
    <property type="status" value="JOINED"/>
    <property type="molecule type" value="Genomic_DNA"/>
</dbReference>
<dbReference type="EMBL" id="AL356072">
    <property type="status" value="NOT_ANNOTATED_CDS"/>
    <property type="molecule type" value="Genomic_DNA"/>
</dbReference>
<dbReference type="EMBL" id="AL357713">
    <property type="status" value="NOT_ANNOTATED_CDS"/>
    <property type="molecule type" value="Genomic_DNA"/>
</dbReference>
<dbReference type="EMBL" id="AL096855">
    <property type="status" value="NOT_ANNOTATED_CDS"/>
    <property type="molecule type" value="Genomic_DNA"/>
</dbReference>
<dbReference type="EMBL" id="AB007927">
    <property type="protein sequence ID" value="BAA32303.3"/>
    <property type="molecule type" value="mRNA"/>
</dbReference>
<dbReference type="EMBL" id="AF118275">
    <property type="protein sequence ID" value="AAD27584.1"/>
    <property type="status" value="ALT_INIT"/>
    <property type="molecule type" value="mRNA"/>
</dbReference>
<dbReference type="CCDS" id="CCDS41243.1">
    <molecule id="Q9P2R6-2"/>
</dbReference>
<dbReference type="CCDS" id="CCDS95.1">
    <molecule id="Q9P2R6-1"/>
</dbReference>
<dbReference type="RefSeq" id="NP_001036146.1">
    <molecule id="Q9P2R6-1"/>
    <property type="nucleotide sequence ID" value="NM_001042681.2"/>
</dbReference>
<dbReference type="RefSeq" id="NP_001036147.1">
    <molecule id="Q9P2R6-2"/>
    <property type="nucleotide sequence ID" value="NM_001042682.2"/>
</dbReference>
<dbReference type="RefSeq" id="NP_036234.3">
    <molecule id="Q9P2R6-1"/>
    <property type="nucleotide sequence ID" value="NM_012102.3"/>
</dbReference>
<dbReference type="RefSeq" id="XP_005263521.1">
    <property type="nucleotide sequence ID" value="XM_005263464.2"/>
</dbReference>
<dbReference type="RefSeq" id="XP_016856847.1">
    <property type="nucleotide sequence ID" value="XM_017001358.1"/>
</dbReference>
<dbReference type="RefSeq" id="XP_016856848.1">
    <property type="nucleotide sequence ID" value="XM_017001359.1"/>
</dbReference>
<dbReference type="PDB" id="2YQK">
    <property type="method" value="NMR"/>
    <property type="chains" value="A=392-441"/>
</dbReference>
<dbReference type="PDBsum" id="2YQK"/>
<dbReference type="SMR" id="Q9P2R6"/>
<dbReference type="BioGRID" id="106963">
    <property type="interactions" value="92"/>
</dbReference>
<dbReference type="DIP" id="DIP-47606N"/>
<dbReference type="FunCoup" id="Q9P2R6">
    <property type="interactions" value="3389"/>
</dbReference>
<dbReference type="IntAct" id="Q9P2R6">
    <property type="interactions" value="41"/>
</dbReference>
<dbReference type="MINT" id="Q9P2R6"/>
<dbReference type="STRING" id="9606.ENSP00000338629"/>
<dbReference type="CarbonylDB" id="Q9P2R6"/>
<dbReference type="GlyCosmos" id="Q9P2R6">
    <property type="glycosylation" value="3 sites, 2 glycans"/>
</dbReference>
<dbReference type="GlyGen" id="Q9P2R6">
    <property type="glycosylation" value="13 sites, 2 O-linked glycans (7 sites)"/>
</dbReference>
<dbReference type="iPTMnet" id="Q9P2R6"/>
<dbReference type="PhosphoSitePlus" id="Q9P2R6"/>
<dbReference type="BioMuta" id="RERE"/>
<dbReference type="DMDM" id="85540730"/>
<dbReference type="jPOST" id="Q9P2R6"/>
<dbReference type="MassIVE" id="Q9P2R6"/>
<dbReference type="PaxDb" id="9606-ENSP00000338629"/>
<dbReference type="PeptideAtlas" id="Q9P2R6"/>
<dbReference type="ProteomicsDB" id="83883">
    <molecule id="Q9P2R6-1"/>
</dbReference>
<dbReference type="ProteomicsDB" id="83884">
    <molecule id="Q9P2R6-2"/>
</dbReference>
<dbReference type="Pumba" id="Q9P2R6"/>
<dbReference type="Antibodypedia" id="13215">
    <property type="antibodies" value="160 antibodies from 24 providers"/>
</dbReference>
<dbReference type="DNASU" id="473"/>
<dbReference type="Ensembl" id="ENST00000337907.7">
    <molecule id="Q9P2R6-1"/>
    <property type="protein sequence ID" value="ENSP00000338629.3"/>
    <property type="gene ID" value="ENSG00000142599.20"/>
</dbReference>
<dbReference type="Ensembl" id="ENST00000400908.7">
    <molecule id="Q9P2R6-1"/>
    <property type="protein sequence ID" value="ENSP00000383700.2"/>
    <property type="gene ID" value="ENSG00000142599.20"/>
</dbReference>
<dbReference type="Ensembl" id="ENST00000465125.2">
    <molecule id="Q9P2R6-2"/>
    <property type="protein sequence ID" value="ENSP00000515651.1"/>
    <property type="gene ID" value="ENSG00000142599.20"/>
</dbReference>
<dbReference type="Ensembl" id="ENST00000476556.5">
    <molecule id="Q9P2R6-2"/>
    <property type="protein sequence ID" value="ENSP00000422246.1"/>
    <property type="gene ID" value="ENSG00000142599.20"/>
</dbReference>
<dbReference type="GeneID" id="473"/>
<dbReference type="KEGG" id="hsa:473"/>
<dbReference type="MANE-Select" id="ENST00000400908.7">
    <property type="protein sequence ID" value="ENSP00000383700.2"/>
    <property type="RefSeq nucleotide sequence ID" value="NM_001042681.2"/>
    <property type="RefSeq protein sequence ID" value="NP_001036146.1"/>
</dbReference>
<dbReference type="UCSC" id="uc001apd.4">
    <molecule id="Q9P2R6-1"/>
    <property type="organism name" value="human"/>
</dbReference>
<dbReference type="AGR" id="HGNC:9965"/>
<dbReference type="CTD" id="473"/>
<dbReference type="DisGeNET" id="473"/>
<dbReference type="GeneCards" id="RERE"/>
<dbReference type="GeneReviews" id="RERE"/>
<dbReference type="HGNC" id="HGNC:9965">
    <property type="gene designation" value="RERE"/>
</dbReference>
<dbReference type="HPA" id="ENSG00000142599">
    <property type="expression patterns" value="Low tissue specificity"/>
</dbReference>
<dbReference type="MalaCards" id="RERE"/>
<dbReference type="MIM" id="605226">
    <property type="type" value="gene"/>
</dbReference>
<dbReference type="MIM" id="616975">
    <property type="type" value="phenotype"/>
</dbReference>
<dbReference type="neXtProt" id="NX_Q9P2R6"/>
<dbReference type="OpenTargets" id="ENSG00000142599"/>
<dbReference type="Orphanet" id="1606">
    <property type="disease" value="1p36 deletion syndrome"/>
</dbReference>
<dbReference type="Orphanet" id="494344">
    <property type="disease" value="RERE-related neurodevelopmental syndrome"/>
</dbReference>
<dbReference type="PharmGKB" id="PA34332"/>
<dbReference type="VEuPathDB" id="HostDB:ENSG00000142599"/>
<dbReference type="eggNOG" id="KOG2133">
    <property type="taxonomic scope" value="Eukaryota"/>
</dbReference>
<dbReference type="GeneTree" id="ENSGT00940000153615"/>
<dbReference type="HOGENOM" id="CLU_005292_1_0_1"/>
<dbReference type="InParanoid" id="Q9P2R6"/>
<dbReference type="OMA" id="MPMPHIK"/>
<dbReference type="OrthoDB" id="6147534at2759"/>
<dbReference type="PAN-GO" id="Q9P2R6">
    <property type="GO annotations" value="2 GO annotations based on evolutionary models"/>
</dbReference>
<dbReference type="PhylomeDB" id="Q9P2R6"/>
<dbReference type="TreeFam" id="TF328554"/>
<dbReference type="PathwayCommons" id="Q9P2R6"/>
<dbReference type="SignaLink" id="Q9P2R6"/>
<dbReference type="SIGNOR" id="Q9P2R6"/>
<dbReference type="BioGRID-ORCS" id="473">
    <property type="hits" value="42 hits in 1187 CRISPR screens"/>
</dbReference>
<dbReference type="ChiTaRS" id="RERE">
    <property type="organism name" value="human"/>
</dbReference>
<dbReference type="EvolutionaryTrace" id="Q9P2R6"/>
<dbReference type="GeneWiki" id="RERE"/>
<dbReference type="GenomeRNAi" id="473"/>
<dbReference type="Pharos" id="Q9P2R6">
    <property type="development level" value="Tbio"/>
</dbReference>
<dbReference type="PRO" id="PR:Q9P2R6"/>
<dbReference type="Proteomes" id="UP000005640">
    <property type="component" value="Chromosome 1"/>
</dbReference>
<dbReference type="RNAct" id="Q9P2R6">
    <property type="molecule type" value="protein"/>
</dbReference>
<dbReference type="Bgee" id="ENSG00000142599">
    <property type="expression patterns" value="Expressed in sural nerve and 207 other cell types or tissues"/>
</dbReference>
<dbReference type="ExpressionAtlas" id="Q9P2R6">
    <property type="expression patterns" value="baseline and differential"/>
</dbReference>
<dbReference type="GO" id="GO:0000118">
    <property type="term" value="C:histone deacetylase complex"/>
    <property type="evidence" value="ECO:0007669"/>
    <property type="project" value="Ensembl"/>
</dbReference>
<dbReference type="GO" id="GO:0016604">
    <property type="term" value="C:nuclear body"/>
    <property type="evidence" value="ECO:0000314"/>
    <property type="project" value="HPA"/>
</dbReference>
<dbReference type="GO" id="GO:0005654">
    <property type="term" value="C:nucleoplasm"/>
    <property type="evidence" value="ECO:0000314"/>
    <property type="project" value="HPA"/>
</dbReference>
<dbReference type="GO" id="GO:0005634">
    <property type="term" value="C:nucleus"/>
    <property type="evidence" value="ECO:0000314"/>
    <property type="project" value="GO_Central"/>
</dbReference>
<dbReference type="GO" id="GO:0003682">
    <property type="term" value="F:chromatin binding"/>
    <property type="evidence" value="ECO:0007669"/>
    <property type="project" value="InterPro"/>
</dbReference>
<dbReference type="GO" id="GO:0043565">
    <property type="term" value="F:sequence-specific DNA binding"/>
    <property type="evidence" value="ECO:0007669"/>
    <property type="project" value="InterPro"/>
</dbReference>
<dbReference type="GO" id="GO:0003713">
    <property type="term" value="F:transcription coactivator activity"/>
    <property type="evidence" value="ECO:0007669"/>
    <property type="project" value="Ensembl"/>
</dbReference>
<dbReference type="GO" id="GO:0003714">
    <property type="term" value="F:transcription corepressor activity"/>
    <property type="evidence" value="ECO:0000318"/>
    <property type="project" value="GO_Central"/>
</dbReference>
<dbReference type="GO" id="GO:0008270">
    <property type="term" value="F:zinc ion binding"/>
    <property type="evidence" value="ECO:0007669"/>
    <property type="project" value="UniProtKB-KW"/>
</dbReference>
<dbReference type="GO" id="GO:0048755">
    <property type="term" value="P:branching morphogenesis of a nerve"/>
    <property type="evidence" value="ECO:0007669"/>
    <property type="project" value="Ensembl"/>
</dbReference>
<dbReference type="GO" id="GO:0021930">
    <property type="term" value="P:cerebellar granule cell precursor proliferation"/>
    <property type="evidence" value="ECO:0007669"/>
    <property type="project" value="Ensembl"/>
</dbReference>
<dbReference type="GO" id="GO:0021691">
    <property type="term" value="P:cerebellar Purkinje cell layer maturation"/>
    <property type="evidence" value="ECO:0007669"/>
    <property type="project" value="Ensembl"/>
</dbReference>
<dbReference type="GO" id="GO:0006338">
    <property type="term" value="P:chromatin remodeling"/>
    <property type="evidence" value="ECO:0007669"/>
    <property type="project" value="Ensembl"/>
</dbReference>
<dbReference type="GO" id="GO:0048813">
    <property type="term" value="P:dendrite morphogenesis"/>
    <property type="evidence" value="ECO:0007669"/>
    <property type="project" value="Ensembl"/>
</dbReference>
<dbReference type="GO" id="GO:0021942">
    <property type="term" value="P:radial glia guided migration of Purkinje cell"/>
    <property type="evidence" value="ECO:0007669"/>
    <property type="project" value="Ensembl"/>
</dbReference>
<dbReference type="CDD" id="cd04709">
    <property type="entry name" value="BAH_MTA"/>
    <property type="match status" value="1"/>
</dbReference>
<dbReference type="CDD" id="cd11661">
    <property type="entry name" value="SANT_MTA3_like"/>
    <property type="match status" value="1"/>
</dbReference>
<dbReference type="CDD" id="cd00202">
    <property type="entry name" value="ZnF_GATA"/>
    <property type="match status" value="1"/>
</dbReference>
<dbReference type="FunFam" id="1.10.10.60:FF:000052">
    <property type="entry name" value="Arginine-glutamic acid dipeptide (RE) repeats"/>
    <property type="match status" value="1"/>
</dbReference>
<dbReference type="FunFam" id="4.10.1240.50:FF:000003">
    <property type="entry name" value="Arginine-glutamic acid dipeptide (RE) repeats a"/>
    <property type="match status" value="1"/>
</dbReference>
<dbReference type="Gene3D" id="2.30.30.490">
    <property type="match status" value="1"/>
</dbReference>
<dbReference type="Gene3D" id="4.10.1240.50">
    <property type="match status" value="1"/>
</dbReference>
<dbReference type="Gene3D" id="1.10.10.60">
    <property type="entry name" value="Homeodomain-like"/>
    <property type="match status" value="1"/>
</dbReference>
<dbReference type="InterPro" id="IPR002951">
    <property type="entry name" value="Atrophin-like"/>
</dbReference>
<dbReference type="InterPro" id="IPR001025">
    <property type="entry name" value="BAH_dom"/>
</dbReference>
<dbReference type="InterPro" id="IPR043151">
    <property type="entry name" value="BAH_sf"/>
</dbReference>
<dbReference type="InterPro" id="IPR000949">
    <property type="entry name" value="ELM2_dom"/>
</dbReference>
<dbReference type="InterPro" id="IPR009057">
    <property type="entry name" value="Homeodomain-like_sf"/>
</dbReference>
<dbReference type="InterPro" id="IPR001005">
    <property type="entry name" value="SANT/Myb"/>
</dbReference>
<dbReference type="InterPro" id="IPR017884">
    <property type="entry name" value="SANT_dom"/>
</dbReference>
<dbReference type="InterPro" id="IPR000679">
    <property type="entry name" value="Znf_GATA"/>
</dbReference>
<dbReference type="PANTHER" id="PTHR13859:SF12">
    <property type="entry name" value="ARGININE-GLUTAMIC ACID DIPEPTIDE REPEATS PROTEIN"/>
    <property type="match status" value="1"/>
</dbReference>
<dbReference type="PANTHER" id="PTHR13859">
    <property type="entry name" value="ATROPHIN-RELATED"/>
    <property type="match status" value="1"/>
</dbReference>
<dbReference type="Pfam" id="PF03154">
    <property type="entry name" value="Atrophin-1"/>
    <property type="match status" value="1"/>
</dbReference>
<dbReference type="Pfam" id="PF01426">
    <property type="entry name" value="BAH"/>
    <property type="match status" value="1"/>
</dbReference>
<dbReference type="Pfam" id="PF01448">
    <property type="entry name" value="ELM2"/>
    <property type="match status" value="1"/>
</dbReference>
<dbReference type="Pfam" id="PF00320">
    <property type="entry name" value="GATA"/>
    <property type="match status" value="1"/>
</dbReference>
<dbReference type="SMART" id="SM00439">
    <property type="entry name" value="BAH"/>
    <property type="match status" value="1"/>
</dbReference>
<dbReference type="SMART" id="SM01189">
    <property type="entry name" value="ELM2"/>
    <property type="match status" value="1"/>
</dbReference>
<dbReference type="SMART" id="SM00717">
    <property type="entry name" value="SANT"/>
    <property type="match status" value="1"/>
</dbReference>
<dbReference type="SMART" id="SM00401">
    <property type="entry name" value="ZnF_GATA"/>
    <property type="match status" value="1"/>
</dbReference>
<dbReference type="SUPFAM" id="SSF57716">
    <property type="entry name" value="Glucocorticoid receptor-like (DNA-binding domain)"/>
    <property type="match status" value="1"/>
</dbReference>
<dbReference type="SUPFAM" id="SSF46689">
    <property type="entry name" value="Homeodomain-like"/>
    <property type="match status" value="1"/>
</dbReference>
<dbReference type="PROSITE" id="PS51038">
    <property type="entry name" value="BAH"/>
    <property type="match status" value="1"/>
</dbReference>
<dbReference type="PROSITE" id="PS51156">
    <property type="entry name" value="ELM2"/>
    <property type="match status" value="1"/>
</dbReference>
<dbReference type="PROSITE" id="PS51293">
    <property type="entry name" value="SANT"/>
    <property type="match status" value="1"/>
</dbReference>
<protein>
    <recommendedName>
        <fullName>Arginine-glutamic acid dipeptide repeats protein</fullName>
    </recommendedName>
    <alternativeName>
        <fullName>Atrophin-1-like protein</fullName>
    </alternativeName>
    <alternativeName>
        <fullName>Atrophin-1-related protein</fullName>
    </alternativeName>
</protein>
<comment type="function">
    <text evidence="10">Plays a role as a transcriptional repressor during development. May play a role in the control of cell survival. Overexpression of RERE recruits BAX to the nucleus particularly to POD and triggers caspase-3 activation, leading to cell death.</text>
</comment>
<comment type="subunit">
    <text evidence="1 9 11">Interacts with HDAC1 (By similarity). Interacts with ATN1. Interaction with ATN1 is improved when the poly-Gln region of ATN1 is extended. Interacts with FAT1.</text>
</comment>
<comment type="interaction">
    <interactant intactId="EBI-948076">
        <id>Q9P2R6</id>
    </interactant>
    <interactant intactId="EBI-945980">
        <id>P54259</id>
        <label>ATN1</label>
    </interactant>
    <organismsDiffer>false</organismsDiffer>
    <experiments>3</experiments>
</comment>
<comment type="interaction">
    <interactant intactId="EBI-948076">
        <id>Q9P2R6</id>
    </interactant>
    <interactant intactId="EBI-744556">
        <id>Q96HB5</id>
        <label>CCDC120</label>
    </interactant>
    <organismsDiffer>false</organismsDiffer>
    <experiments>3</experiments>
</comment>
<comment type="interaction">
    <interactant intactId="EBI-948076">
        <id>Q9P2R6</id>
    </interactant>
    <interactant intactId="EBI-744366">
        <id>Q96KQ7</id>
        <label>EHMT2</label>
    </interactant>
    <organismsDiffer>false</organismsDiffer>
    <experiments>3</experiments>
</comment>
<comment type="interaction">
    <interactant intactId="EBI-948076">
        <id>Q9P2R6</id>
    </interactant>
    <interactant intactId="EBI-10176396">
        <id>P60329</id>
        <label>KRTAP12-4</label>
    </interactant>
    <organismsDiffer>false</organismsDiffer>
    <experiments>3</experiments>
</comment>
<comment type="interaction">
    <interactant intactId="EBI-948076">
        <id>Q9P2R6</id>
    </interactant>
    <interactant intactId="EBI-11962084">
        <id>Q3LI66</id>
        <label>KRTAP6-2</label>
    </interactant>
    <organismsDiffer>false</organismsDiffer>
    <experiments>3</experiments>
</comment>
<comment type="interaction">
    <interactant intactId="EBI-948076">
        <id>Q9P2R6</id>
    </interactant>
    <interactant intactId="EBI-766589">
        <id>P09234</id>
        <label>SNRPC</label>
    </interactant>
    <organismsDiffer>false</organismsDiffer>
    <experiments>3</experiments>
</comment>
<comment type="subcellular location">
    <subcellularLocation>
        <location evidence="5 6 9 10">Nucleus</location>
    </subcellularLocation>
    <text>Localized in nuclear bodies of variables size. Colocalized with PML and BAX in nuclear PODs.</text>
</comment>
<comment type="alternative products">
    <event type="alternative splicing"/>
    <isoform>
        <id>Q9P2R6-1</id>
        <name>1</name>
        <sequence type="displayed"/>
    </isoform>
    <isoform>
        <id>Q9P2R6-2</id>
        <name>2</name>
        <sequence type="described" ref="VSP_016878"/>
    </isoform>
    <text>Additional isoforms seem to exist.</text>
</comment>
<comment type="tissue specificity">
    <text evidence="8 9 10">Widely expressed. Expressed in tumor cell lines.</text>
</comment>
<comment type="domain">
    <text>The interaction with ATN1 is mediated by the coiled coil domain.</text>
</comment>
<comment type="disease">
    <text>A chromosomal aberration involving RERE is found in the neuroblastoma cell line NGP. Translocation t(1;15)(p36.2;q24).</text>
</comment>
<comment type="disease" evidence="12">
    <disease id="DI-04746">
        <name>Neurodevelopmental disorder with or without anomalies of the brain, eye, or heart</name>
        <acronym>NEDBEH</acronym>
        <description>An autosomal dominant syndrome characterized by developmental delay, intellectual disability, brain anomalies, and neurological abnormalities including seizures, hypotonia, and behavioral problems such as autism spectrum disorders. Brain anomalies include abnormalities and/or thinning of the corpus callosum, diminished white matter volume, abnormal cerebellar vermis, and ventriculomegaly. Congenital defects of the eye, heart and genitourinary system are present in half of the patients.</description>
        <dbReference type="MIM" id="616975"/>
    </disease>
    <text>The disease may be caused by variants affecting the gene represented in this entry.</text>
</comment>
<comment type="sequence caution" evidence="14">
    <conflict type="frameshift">
        <sequence resource="EMBL-CDS" id="AAC31120"/>
    </conflict>
</comment>
<comment type="sequence caution" evidence="14">
    <conflict type="erroneous initiation">
        <sequence resource="EMBL-CDS" id="AAD27584"/>
    </conflict>
</comment>
<organism>
    <name type="scientific">Homo sapiens</name>
    <name type="common">Human</name>
    <dbReference type="NCBI Taxonomy" id="9606"/>
    <lineage>
        <taxon>Eukaryota</taxon>
        <taxon>Metazoa</taxon>
        <taxon>Chordata</taxon>
        <taxon>Craniata</taxon>
        <taxon>Vertebrata</taxon>
        <taxon>Euteleostomi</taxon>
        <taxon>Mammalia</taxon>
        <taxon>Eutheria</taxon>
        <taxon>Euarchontoglires</taxon>
        <taxon>Primates</taxon>
        <taxon>Haplorrhini</taxon>
        <taxon>Catarrhini</taxon>
        <taxon>Hominidae</taxon>
        <taxon>Homo</taxon>
    </lineage>
</organism>
<keyword id="KW-0002">3D-structure</keyword>
<keyword id="KW-0007">Acetylation</keyword>
<keyword id="KW-0025">Alternative splicing</keyword>
<keyword id="KW-0160">Chromosomal rearrangement</keyword>
<keyword id="KW-0175">Coiled coil</keyword>
<keyword id="KW-0217">Developmental protein</keyword>
<keyword id="KW-0225">Disease variant</keyword>
<keyword id="KW-0991">Intellectual disability</keyword>
<keyword id="KW-1017">Isopeptide bond</keyword>
<keyword id="KW-0479">Metal-binding</keyword>
<keyword id="KW-0539">Nucleus</keyword>
<keyword id="KW-0597">Phosphoprotein</keyword>
<keyword id="KW-1267">Proteomics identification</keyword>
<keyword id="KW-1185">Reference proteome</keyword>
<keyword id="KW-0678">Repressor</keyword>
<keyword id="KW-0804">Transcription</keyword>
<keyword id="KW-0805">Transcription regulation</keyword>
<keyword id="KW-0832">Ubl conjugation</keyword>
<keyword id="KW-0862">Zinc</keyword>
<keyword id="KW-0863">Zinc-finger</keyword>
<reference key="1">
    <citation type="journal article" date="2000" name="Hum. Mol. Genet.">
        <title>Protein binding of a DRPLA family through arginine-glutamic acid dipeptide repeats is enhanced by extended polyglutamine.</title>
        <authorList>
            <person name="Yanagisawa H."/>
            <person name="Bundo M."/>
            <person name="Miyashita T."/>
            <person name="Okamura-Oho Y."/>
            <person name="Tadokoro K."/>
            <person name="Tokunaga K."/>
            <person name="Yamada M."/>
        </authorList>
    </citation>
    <scope>NUCLEOTIDE SEQUENCE [MRNA] (ISOFORM 1)</scope>
    <scope>INTERACTION WITH ATN1</scope>
    <scope>SUBCELLULAR LOCATION</scope>
    <scope>TISSUE SPECIFICITY</scope>
</reference>
<reference key="2">
    <citation type="journal article" date="2001" name="Cell Growth Differ.">
        <title>Human RERE is localized to nuclear promyelocytic leukemia oncogenic domains and enhances apoptosis.</title>
        <authorList>
            <person name="Waerner T."/>
            <person name="Gardellin P."/>
            <person name="Pfizenmaier K."/>
            <person name="Weith A."/>
            <person name="Kraut N."/>
        </authorList>
    </citation>
    <scope>NUCLEOTIDE SEQUENCE [MRNA] (ISOFORM 1)</scope>
    <scope>FUNCTION</scope>
    <scope>TISSUE SPECIFICITY</scope>
    <scope>SUBCELLULAR LOCATION</scope>
</reference>
<reference key="3">
    <citation type="submission" date="1998-01" db="EMBL/GenBank/DDBJ databases">
        <title>Cloning and localization of human atrophin-1 (DRPLA) related gene.</title>
        <authorList>
            <person name="Xia J.-H."/>
            <person name="Liu C.-Y."/>
            <person name="Ruan Q.-G."/>
            <person name="Wang D.-A."/>
            <person name="Deng H.-X."/>
        </authorList>
    </citation>
    <scope>NUCLEOTIDE SEQUENCE [GENOMIC DNA / MRNA] (ISOFORM 2)</scope>
</reference>
<reference key="4">
    <citation type="journal article" date="2006" name="Nature">
        <title>The DNA sequence and biological annotation of human chromosome 1.</title>
        <authorList>
            <person name="Gregory S.G."/>
            <person name="Barlow K.F."/>
            <person name="McLay K.E."/>
            <person name="Kaul R."/>
            <person name="Swarbreck D."/>
            <person name="Dunham A."/>
            <person name="Scott C.E."/>
            <person name="Howe K.L."/>
            <person name="Woodfine K."/>
            <person name="Spencer C.C.A."/>
            <person name="Jones M.C."/>
            <person name="Gillson C."/>
            <person name="Searle S."/>
            <person name="Zhou Y."/>
            <person name="Kokocinski F."/>
            <person name="McDonald L."/>
            <person name="Evans R."/>
            <person name="Phillips K."/>
            <person name="Atkinson A."/>
            <person name="Cooper R."/>
            <person name="Jones C."/>
            <person name="Hall R.E."/>
            <person name="Andrews T.D."/>
            <person name="Lloyd C."/>
            <person name="Ainscough R."/>
            <person name="Almeida J.P."/>
            <person name="Ambrose K.D."/>
            <person name="Anderson F."/>
            <person name="Andrew R.W."/>
            <person name="Ashwell R.I.S."/>
            <person name="Aubin K."/>
            <person name="Babbage A.K."/>
            <person name="Bagguley C.L."/>
            <person name="Bailey J."/>
            <person name="Beasley H."/>
            <person name="Bethel G."/>
            <person name="Bird C.P."/>
            <person name="Bray-Allen S."/>
            <person name="Brown J.Y."/>
            <person name="Brown A.J."/>
            <person name="Buckley D."/>
            <person name="Burton J."/>
            <person name="Bye J."/>
            <person name="Carder C."/>
            <person name="Chapman J.C."/>
            <person name="Clark S.Y."/>
            <person name="Clarke G."/>
            <person name="Clee C."/>
            <person name="Cobley V."/>
            <person name="Collier R.E."/>
            <person name="Corby N."/>
            <person name="Coville G.J."/>
            <person name="Davies J."/>
            <person name="Deadman R."/>
            <person name="Dunn M."/>
            <person name="Earthrowl M."/>
            <person name="Ellington A.G."/>
            <person name="Errington H."/>
            <person name="Frankish A."/>
            <person name="Frankland J."/>
            <person name="French L."/>
            <person name="Garner P."/>
            <person name="Garnett J."/>
            <person name="Gay L."/>
            <person name="Ghori M.R.J."/>
            <person name="Gibson R."/>
            <person name="Gilby L.M."/>
            <person name="Gillett W."/>
            <person name="Glithero R.J."/>
            <person name="Grafham D.V."/>
            <person name="Griffiths C."/>
            <person name="Griffiths-Jones S."/>
            <person name="Grocock R."/>
            <person name="Hammond S."/>
            <person name="Harrison E.S.I."/>
            <person name="Hart E."/>
            <person name="Haugen E."/>
            <person name="Heath P.D."/>
            <person name="Holmes S."/>
            <person name="Holt K."/>
            <person name="Howden P.J."/>
            <person name="Hunt A.R."/>
            <person name="Hunt S.E."/>
            <person name="Hunter G."/>
            <person name="Isherwood J."/>
            <person name="James R."/>
            <person name="Johnson C."/>
            <person name="Johnson D."/>
            <person name="Joy A."/>
            <person name="Kay M."/>
            <person name="Kershaw J.K."/>
            <person name="Kibukawa M."/>
            <person name="Kimberley A.M."/>
            <person name="King A."/>
            <person name="Knights A.J."/>
            <person name="Lad H."/>
            <person name="Laird G."/>
            <person name="Lawlor S."/>
            <person name="Leongamornlert D.A."/>
            <person name="Lloyd D.M."/>
            <person name="Loveland J."/>
            <person name="Lovell J."/>
            <person name="Lush M.J."/>
            <person name="Lyne R."/>
            <person name="Martin S."/>
            <person name="Mashreghi-Mohammadi M."/>
            <person name="Matthews L."/>
            <person name="Matthews N.S.W."/>
            <person name="McLaren S."/>
            <person name="Milne S."/>
            <person name="Mistry S."/>
            <person name="Moore M.J.F."/>
            <person name="Nickerson T."/>
            <person name="O'Dell C.N."/>
            <person name="Oliver K."/>
            <person name="Palmeiri A."/>
            <person name="Palmer S.A."/>
            <person name="Parker A."/>
            <person name="Patel D."/>
            <person name="Pearce A.V."/>
            <person name="Peck A.I."/>
            <person name="Pelan S."/>
            <person name="Phelps K."/>
            <person name="Phillimore B.J."/>
            <person name="Plumb R."/>
            <person name="Rajan J."/>
            <person name="Raymond C."/>
            <person name="Rouse G."/>
            <person name="Saenphimmachak C."/>
            <person name="Sehra H.K."/>
            <person name="Sheridan E."/>
            <person name="Shownkeen R."/>
            <person name="Sims S."/>
            <person name="Skuce C.D."/>
            <person name="Smith M."/>
            <person name="Steward C."/>
            <person name="Subramanian S."/>
            <person name="Sycamore N."/>
            <person name="Tracey A."/>
            <person name="Tromans A."/>
            <person name="Van Helmond Z."/>
            <person name="Wall M."/>
            <person name="Wallis J.M."/>
            <person name="White S."/>
            <person name="Whitehead S.L."/>
            <person name="Wilkinson J.E."/>
            <person name="Willey D.L."/>
            <person name="Williams H."/>
            <person name="Wilming L."/>
            <person name="Wray P.W."/>
            <person name="Wu Z."/>
            <person name="Coulson A."/>
            <person name="Vaudin M."/>
            <person name="Sulston J.E."/>
            <person name="Durbin R.M."/>
            <person name="Hubbard T."/>
            <person name="Wooster R."/>
            <person name="Dunham I."/>
            <person name="Carter N.P."/>
            <person name="McVean G."/>
            <person name="Ross M.T."/>
            <person name="Harrow J."/>
            <person name="Olson M.V."/>
            <person name="Beck S."/>
            <person name="Rogers J."/>
            <person name="Bentley D.R."/>
        </authorList>
    </citation>
    <scope>NUCLEOTIDE SEQUENCE [LARGE SCALE GENOMIC DNA]</scope>
</reference>
<reference key="5">
    <citation type="journal article" date="1997" name="DNA Res.">
        <title>Characterization of cDNA clones in size-fractionated cDNA libraries from human brain.</title>
        <authorList>
            <person name="Seki N."/>
            <person name="Ohira M."/>
            <person name="Nagase T."/>
            <person name="Ishikawa K."/>
            <person name="Miyajima N."/>
            <person name="Nakajima D."/>
            <person name="Nomura N."/>
            <person name="Ohara O."/>
        </authorList>
    </citation>
    <scope>NUCLEOTIDE SEQUENCE [LARGE SCALE MRNA] OF 15-1566 (ISOFORM 1)</scope>
    <source>
        <tissue>Brain</tissue>
    </source>
</reference>
<reference key="6">
    <citation type="journal article" date="2000" name="Genomics">
        <title>Identification and characterization of novel genes located at the t(1;15)(p36.2;q24) translocation breakpoint in the neuroblastoma cell line NGP.</title>
        <authorList>
            <person name="Amler L.C."/>
            <person name="Bauer A."/>
            <person name="Corvi R."/>
            <person name="Dihlmann S."/>
            <person name="Praml C."/>
            <person name="Cavenee W.K."/>
            <person name="Schwab M."/>
            <person name="Hampton G.M."/>
        </authorList>
    </citation>
    <scope>NUCLEOTIDE SEQUENCE [MRNA] OF 555-1566</scope>
    <scope>TISSUE SPECIFICITY</scope>
    <scope>CHROMOSOMAL TRANSLOCATION</scope>
</reference>
<reference key="7">
    <citation type="journal article" date="2008" name="J. Proteome Res.">
        <title>Combining protein-based IMAC, peptide-based IMAC, and MudPIT for efficient phosphoproteomic analysis.</title>
        <authorList>
            <person name="Cantin G.T."/>
            <person name="Yi W."/>
            <person name="Lu B."/>
            <person name="Park S.K."/>
            <person name="Xu T."/>
            <person name="Lee J.-D."/>
            <person name="Yates J.R. III"/>
        </authorList>
    </citation>
    <scope>PHOSPHORYLATION [LARGE SCALE ANALYSIS] AT SER-304 AND SER-1106</scope>
    <scope>IDENTIFICATION BY MASS SPECTROMETRY [LARGE SCALE ANALYSIS]</scope>
    <source>
        <tissue>Cervix carcinoma</tissue>
    </source>
</reference>
<reference key="8">
    <citation type="journal article" date="2008" name="Proc. Natl. Acad. Sci. U.S.A.">
        <title>A quantitative atlas of mitotic phosphorylation.</title>
        <authorList>
            <person name="Dephoure N."/>
            <person name="Zhou C."/>
            <person name="Villen J."/>
            <person name="Beausoleil S.A."/>
            <person name="Bakalarski C.E."/>
            <person name="Elledge S.J."/>
            <person name="Gygi S.P."/>
        </authorList>
    </citation>
    <scope>PHOSPHORYLATION [LARGE SCALE ANALYSIS] AT SER-53; SER-56 AND SER-642</scope>
    <scope>IDENTIFICATION BY MASS SPECTROMETRY [LARGE SCALE ANALYSIS]</scope>
    <source>
        <tissue>Cervix carcinoma</tissue>
    </source>
</reference>
<reference key="9">
    <citation type="journal article" date="2009" name="J. Biol. Chem.">
        <title>Atrophin proteins interact with the Fat1 cadherin and regulate migration and orientation in vascular smooth muscle cells.</title>
        <authorList>
            <person name="Hou R."/>
            <person name="Sibinga N.E."/>
        </authorList>
    </citation>
    <scope>INTERACTION WITH FAT1</scope>
</reference>
<reference key="10">
    <citation type="journal article" date="2009" name="Sci. Signal.">
        <title>Quantitative phosphoproteomic analysis of T cell receptor signaling reveals system-wide modulation of protein-protein interactions.</title>
        <authorList>
            <person name="Mayya V."/>
            <person name="Lundgren D.H."/>
            <person name="Hwang S.-I."/>
            <person name="Rezaul K."/>
            <person name="Wu L."/>
            <person name="Eng J.K."/>
            <person name="Rodionov V."/>
            <person name="Han D.K."/>
        </authorList>
    </citation>
    <scope>PHOSPHORYLATION [LARGE SCALE ANALYSIS] AT SER-675 AND SER-679</scope>
    <scope>IDENTIFICATION BY MASS SPECTROMETRY [LARGE SCALE ANALYSIS]</scope>
    <source>
        <tissue>Leukemic T-cell</tissue>
    </source>
</reference>
<reference key="11">
    <citation type="journal article" date="2010" name="Sci. Signal.">
        <title>Quantitative phosphoproteomics reveals widespread full phosphorylation site occupancy during mitosis.</title>
        <authorList>
            <person name="Olsen J.V."/>
            <person name="Vermeulen M."/>
            <person name="Santamaria A."/>
            <person name="Kumar C."/>
            <person name="Miller M.L."/>
            <person name="Jensen L.J."/>
            <person name="Gnad F."/>
            <person name="Cox J."/>
            <person name="Jensen T.S."/>
            <person name="Nigg E.A."/>
            <person name="Brunak S."/>
            <person name="Mann M."/>
        </authorList>
    </citation>
    <scope>PHOSPHORYLATION [LARGE SCALE ANALYSIS] AT SER-642</scope>
    <scope>IDENTIFICATION BY MASS SPECTROMETRY [LARGE SCALE ANALYSIS]</scope>
    <source>
        <tissue>Cervix carcinoma</tissue>
    </source>
</reference>
<reference key="12">
    <citation type="journal article" date="2011" name="Sci. Signal.">
        <title>System-wide temporal characterization of the proteome and phosphoproteome of human embryonic stem cell differentiation.</title>
        <authorList>
            <person name="Rigbolt K.T."/>
            <person name="Prokhorova T.A."/>
            <person name="Akimov V."/>
            <person name="Henningsen J."/>
            <person name="Johansen P.T."/>
            <person name="Kratchmarova I."/>
            <person name="Kassem M."/>
            <person name="Mann M."/>
            <person name="Olsen J.V."/>
            <person name="Blagoev B."/>
        </authorList>
    </citation>
    <scope>PHOSPHORYLATION [LARGE SCALE ANALYSIS] AT SER-53; SER-56; SER-642; SER-656; SER-675; SER-679 AND SER-1106</scope>
    <scope>IDENTIFICATION BY MASS SPECTROMETRY [LARGE SCALE ANALYSIS]</scope>
</reference>
<reference key="13">
    <citation type="journal article" date="2013" name="J. Proteome Res.">
        <title>Toward a comprehensive characterization of a human cancer cell phosphoproteome.</title>
        <authorList>
            <person name="Zhou H."/>
            <person name="Di Palma S."/>
            <person name="Preisinger C."/>
            <person name="Peng M."/>
            <person name="Polat A.N."/>
            <person name="Heck A.J."/>
            <person name="Mohammed S."/>
        </authorList>
    </citation>
    <scope>PHOSPHORYLATION [LARGE SCALE ANALYSIS] AT THR-120; SER-594; SER-600; SER-675; SER-679 AND SER-1266</scope>
    <scope>IDENTIFICATION BY MASS SPECTROMETRY [LARGE SCALE ANALYSIS]</scope>
    <source>
        <tissue>Cervix carcinoma</tissue>
        <tissue>Erythroleukemia</tissue>
    </source>
</reference>
<reference key="14">
    <citation type="journal article" date="2014" name="J. Proteomics">
        <title>An enzyme assisted RP-RPLC approach for in-depth analysis of human liver phosphoproteome.</title>
        <authorList>
            <person name="Bian Y."/>
            <person name="Song C."/>
            <person name="Cheng K."/>
            <person name="Dong M."/>
            <person name="Wang F."/>
            <person name="Huang J."/>
            <person name="Sun D."/>
            <person name="Wang L."/>
            <person name="Ye M."/>
            <person name="Zou H."/>
        </authorList>
    </citation>
    <scope>PHOSPHORYLATION [LARGE SCALE ANALYSIS] AT SER-304; SER-613; SER-1106; SER-1113; THR-1119 AND TYR-1259</scope>
    <scope>IDENTIFICATION BY MASS SPECTROMETRY [LARGE SCALE ANALYSIS]</scope>
    <source>
        <tissue>Liver</tissue>
    </source>
</reference>
<reference key="15">
    <citation type="journal article" date="2014" name="Nat. Struct. Mol. Biol.">
        <title>Uncovering global SUMOylation signaling networks in a site-specific manner.</title>
        <authorList>
            <person name="Hendriks I.A."/>
            <person name="D'Souza R.C."/>
            <person name="Yang B."/>
            <person name="Verlaan-de Vries M."/>
            <person name="Mann M."/>
            <person name="Vertegaal A.C."/>
        </authorList>
    </citation>
    <scope>SUMOYLATION [LARGE SCALE ANALYSIS] AT LYS-637</scope>
    <scope>IDENTIFICATION BY MASS SPECTROMETRY [LARGE SCALE ANALYSIS]</scope>
</reference>
<reference key="16">
    <citation type="journal article" date="2016" name="Am. J. Hum. Genet.">
        <title>De novo mutations of RERE cause a genetic syndrome with features that overlap those associated with proximal 1p36 deletions.</title>
        <authorList>
            <person name="Fregeau B."/>
            <person name="Kim B.J."/>
            <person name="Hernandez-Garcia A."/>
            <person name="Jordan V.K."/>
            <person name="Cho M.T."/>
            <person name="Schnur R.E."/>
            <person name="Monaghan K.G."/>
            <person name="Juusola J."/>
            <person name="Rosenfeld J.A."/>
            <person name="Bhoj E."/>
            <person name="Zackai E.H."/>
            <person name="Sacharow S."/>
            <person name="Baranano K."/>
            <person name="Bosch D.G."/>
            <person name="de Vries B.B."/>
            <person name="Lindstrom K."/>
            <person name="Schroeder A."/>
            <person name="James P."/>
            <person name="Kulch P."/>
            <person name="Lalani S.R."/>
            <person name="van Haelst M.M."/>
            <person name="van Gassen K.L."/>
            <person name="van Binsbergen E."/>
            <person name="Barkovich A.J."/>
            <person name="Scott D.A."/>
            <person name="Sherr E.H."/>
        </authorList>
    </citation>
    <scope>INVOLVEMENT IN NEDBEH</scope>
    <scope>VARIANTS NEDBEH ILE-471; ARG-1156; ARG-1262 AND GLN-1431</scope>
    <scope>CHARACTERIZATION OF VARIANT NEDBEH ARG-1156</scope>
</reference>
<reference key="17">
    <citation type="journal article" date="2017" name="Nat. Struct. Mol. Biol.">
        <title>Site-specific mapping of the human SUMO proteome reveals co-modification with phosphorylation.</title>
        <authorList>
            <person name="Hendriks I.A."/>
            <person name="Lyon D."/>
            <person name="Young C."/>
            <person name="Jensen L.J."/>
            <person name="Vertegaal A.C."/>
            <person name="Nielsen M.L."/>
        </authorList>
    </citation>
    <scope>SUMOYLATION [LARGE SCALE ANALYSIS] AT LYS-560 AND LYS-637</scope>
    <scope>IDENTIFICATION BY MASS SPECTROMETRY [LARGE SCALE ANALYSIS]</scope>
</reference>
<reference key="18">
    <citation type="submission" date="2007-10" db="PDB data bank">
        <title>Solution structure of the SANT domain in arginine-glutamic acid dipeptide (RE) repeats.</title>
        <authorList>
            <consortium name="RIKEN structural genomics initiative (RSGI)"/>
        </authorList>
    </citation>
    <scope>STRUCTURE BY NMR OF 392-446</scope>
</reference>
<proteinExistence type="evidence at protein level"/>
<accession>Q9P2R6</accession>
<accession>O43393</accession>
<accession>O75046</accession>
<accession>O75359</accession>
<accession>Q5VXL9</accession>
<accession>Q6P6B9</accession>
<accession>Q9Y2W4</accession>
<name>RERE_HUMAN</name>